<accession>Q37873</accession>
<organism>
    <name type="scientific">Enterobacteria phage 82</name>
    <name type="common">Bacteriophage 82</name>
    <dbReference type="NCBI Taxonomy" id="10705"/>
    <lineage>
        <taxon>Viruses</taxon>
        <taxon>Duplodnaviria</taxon>
        <taxon>Heunggongvirae</taxon>
        <taxon>Uroviricota</taxon>
        <taxon>Caudoviricetes</taxon>
        <taxon>Lambdavirus</taxon>
    </lineage>
</organism>
<comment type="function">
    <text>Endonuclease that resolves Holliday junction intermediates. Promotes DNA repair. Exhibits sequence and structure-selective cleavage of four-way DNA junctions, where it introduces symmetrical nicks in two strands of the same polarity.</text>
</comment>
<comment type="catalytic activity">
    <reaction>
        <text>Endonucleolytic cleavage at a junction such as a reciprocal single-stranded crossover between two homologous DNA duplexes (Holliday junction).</text>
        <dbReference type="EC" id="3.1.21.10"/>
    </reaction>
</comment>
<comment type="cofactor">
    <cofactor evidence="1">
        <name>Mg(2+)</name>
        <dbReference type="ChEBI" id="CHEBI:18420"/>
    </cofactor>
    <text evidence="1">Binds 1 Mg(2+) ion per subunit.</text>
</comment>
<comment type="subunit">
    <text evidence="1">Homodimer.</text>
</comment>
<comment type="similarity">
    <text evidence="2">Belongs to the RusA family.</text>
</comment>
<gene>
    <name type="primary">rusA</name>
    <name type="synonym">rus</name>
</gene>
<keyword id="KW-0227">DNA damage</keyword>
<keyword id="KW-0233">DNA recombination</keyword>
<keyword id="KW-0234">DNA repair</keyword>
<keyword id="KW-0255">Endonuclease</keyword>
<keyword id="KW-0378">Hydrolase</keyword>
<keyword id="KW-0460">Magnesium</keyword>
<keyword id="KW-0479">Metal-binding</keyword>
<keyword id="KW-0540">Nuclease</keyword>
<organismHost>
    <name type="scientific">Escherichia coli</name>
    <dbReference type="NCBI Taxonomy" id="562"/>
</organismHost>
<proteinExistence type="inferred from homology"/>
<name>RUSA_BP82</name>
<protein>
    <recommendedName>
        <fullName>Crossover junction endodeoxyribonuclease rusA</fullName>
        <ecNumber>3.1.21.10</ecNumber>
    </recommendedName>
    <alternativeName>
        <fullName>Holliday junction nuclease rusA</fullName>
    </alternativeName>
    <alternativeName>
        <fullName>Holliday junction resolvase</fullName>
    </alternativeName>
</protein>
<feature type="chain" id="PRO_0000192006" description="Crossover junction endodeoxyribonuclease rusA">
    <location>
        <begin position="1"/>
        <end position="120"/>
    </location>
</feature>
<feature type="binding site" evidence="1">
    <location>
        <position position="70"/>
    </location>
    <ligand>
        <name>Mg(2+)</name>
        <dbReference type="ChEBI" id="CHEBI:18420"/>
    </ligand>
</feature>
<feature type="binding site" evidence="1">
    <location>
        <position position="72"/>
    </location>
    <ligand>
        <name>Mg(2+)</name>
        <dbReference type="ChEBI" id="CHEBI:18420"/>
    </ligand>
</feature>
<feature type="binding site" evidence="1">
    <location>
        <position position="91"/>
    </location>
    <ligand>
        <name>Mg(2+)</name>
        <dbReference type="ChEBI" id="CHEBI:18420"/>
    </ligand>
</feature>
<reference key="1">
    <citation type="journal article" date="1996" name="J. Mol. Biol.">
        <title>Holliday junction resolvases encoded by homologous rusA genes in Escherichia coli K-12 and phage 82.</title>
        <authorList>
            <person name="Mahdi A.A."/>
            <person name="Sharples G.J."/>
            <person name="Mandal T.N."/>
            <person name="Lloyd R.G."/>
        </authorList>
    </citation>
    <scope>NUCLEOTIDE SEQUENCE [GENOMIC DNA]</scope>
</reference>
<dbReference type="EC" id="3.1.21.10"/>
<dbReference type="EMBL" id="X92588">
    <property type="protein sequence ID" value="CAA63330.1"/>
    <property type="molecule type" value="Genomic_DNA"/>
</dbReference>
<dbReference type="PIR" id="S66583">
    <property type="entry name" value="S66583"/>
</dbReference>
<dbReference type="SMR" id="Q37873"/>
<dbReference type="GO" id="GO:0008821">
    <property type="term" value="F:crossover junction DNA endonuclease activity"/>
    <property type="evidence" value="ECO:0007669"/>
    <property type="project" value="InterPro"/>
</dbReference>
<dbReference type="GO" id="GO:0000287">
    <property type="term" value="F:magnesium ion binding"/>
    <property type="evidence" value="ECO:0007669"/>
    <property type="project" value="InterPro"/>
</dbReference>
<dbReference type="GO" id="GO:0006310">
    <property type="term" value="P:DNA recombination"/>
    <property type="evidence" value="ECO:0007669"/>
    <property type="project" value="UniProtKB-KW"/>
</dbReference>
<dbReference type="GO" id="GO:0006281">
    <property type="term" value="P:DNA repair"/>
    <property type="evidence" value="ECO:0007669"/>
    <property type="project" value="UniProtKB-KW"/>
</dbReference>
<dbReference type="FunFam" id="3.30.1330.70:FF:000001">
    <property type="entry name" value="Crossover junction endodeoxyribonuclease RusA"/>
    <property type="match status" value="1"/>
</dbReference>
<dbReference type="Gene3D" id="3.30.1330.70">
    <property type="entry name" value="Holliday junction resolvase RusA"/>
    <property type="match status" value="1"/>
</dbReference>
<dbReference type="InterPro" id="IPR016281">
    <property type="entry name" value="Endonuclease_RusA"/>
</dbReference>
<dbReference type="InterPro" id="IPR008822">
    <property type="entry name" value="Endonuclease_RusA-like"/>
</dbReference>
<dbReference type="InterPro" id="IPR036614">
    <property type="entry name" value="RusA-like_sf"/>
</dbReference>
<dbReference type="NCBIfam" id="NF007305">
    <property type="entry name" value="PRK09786.1"/>
    <property type="match status" value="1"/>
</dbReference>
<dbReference type="Pfam" id="PF05866">
    <property type="entry name" value="RusA"/>
    <property type="match status" value="1"/>
</dbReference>
<dbReference type="PIRSF" id="PIRSF001007">
    <property type="entry name" value="RusA"/>
    <property type="match status" value="1"/>
</dbReference>
<dbReference type="SUPFAM" id="SSF103084">
    <property type="entry name" value="Holliday junction resolvase RusA"/>
    <property type="match status" value="1"/>
</dbReference>
<sequence length="120" mass="13885">MNTYHITLPWPPSNNRYYRHNRGRTHISAEGQAYRDNVARIIKGSMLDIGLAMPVKIRIECHMPDRRRRDLDNLQKASFDALTKAGFWLDDAQVVDYRVVKMPVTKGGRLELTITEMGNE</sequence>
<evidence type="ECO:0000250" key="1"/>
<evidence type="ECO:0000305" key="2"/>